<dbReference type="EMBL" id="AM420293">
    <property type="protein sequence ID" value="CAM01567.1"/>
    <property type="molecule type" value="Genomic_DNA"/>
</dbReference>
<dbReference type="RefSeq" id="WP_009945846.1">
    <property type="nucleotide sequence ID" value="NC_009142.1"/>
</dbReference>
<dbReference type="SMR" id="A4FBZ2"/>
<dbReference type="STRING" id="405948.SACE_2262"/>
<dbReference type="KEGG" id="sen:SACE_2262"/>
<dbReference type="eggNOG" id="COG1826">
    <property type="taxonomic scope" value="Bacteria"/>
</dbReference>
<dbReference type="HOGENOM" id="CLU_086034_4_0_11"/>
<dbReference type="OrthoDB" id="5245163at2"/>
<dbReference type="Proteomes" id="UP000006728">
    <property type="component" value="Chromosome"/>
</dbReference>
<dbReference type="GO" id="GO:0033281">
    <property type="term" value="C:TAT protein transport complex"/>
    <property type="evidence" value="ECO:0007669"/>
    <property type="project" value="UniProtKB-UniRule"/>
</dbReference>
<dbReference type="GO" id="GO:0008320">
    <property type="term" value="F:protein transmembrane transporter activity"/>
    <property type="evidence" value="ECO:0007669"/>
    <property type="project" value="UniProtKB-UniRule"/>
</dbReference>
<dbReference type="GO" id="GO:0043953">
    <property type="term" value="P:protein transport by the Tat complex"/>
    <property type="evidence" value="ECO:0007669"/>
    <property type="project" value="UniProtKB-UniRule"/>
</dbReference>
<dbReference type="Gene3D" id="1.20.5.3310">
    <property type="match status" value="1"/>
</dbReference>
<dbReference type="HAMAP" id="MF_00236">
    <property type="entry name" value="TatA_E"/>
    <property type="match status" value="1"/>
</dbReference>
<dbReference type="InterPro" id="IPR003369">
    <property type="entry name" value="TatA/B/E"/>
</dbReference>
<dbReference type="InterPro" id="IPR006312">
    <property type="entry name" value="TatA/E"/>
</dbReference>
<dbReference type="NCBIfam" id="NF001854">
    <property type="entry name" value="PRK00575.1"/>
    <property type="match status" value="1"/>
</dbReference>
<dbReference type="PANTHER" id="PTHR42982">
    <property type="entry name" value="SEC-INDEPENDENT PROTEIN TRANSLOCASE PROTEIN TATA"/>
    <property type="match status" value="1"/>
</dbReference>
<dbReference type="PANTHER" id="PTHR42982:SF8">
    <property type="entry name" value="SEC-INDEPENDENT PROTEIN TRANSLOCASE PROTEIN TATA"/>
    <property type="match status" value="1"/>
</dbReference>
<dbReference type="Pfam" id="PF02416">
    <property type="entry name" value="TatA_B_E"/>
    <property type="match status" value="1"/>
</dbReference>
<protein>
    <recommendedName>
        <fullName evidence="1">Sec-independent protein translocase protein TatA</fullName>
    </recommendedName>
</protein>
<name>TATA_SACEN</name>
<accession>A4FBZ2</accession>
<organism>
    <name type="scientific">Saccharopolyspora erythraea (strain ATCC 11635 / DSM 40517 / JCM 4748 / NBRC 13426 / NCIMB 8594 / NRRL 2338)</name>
    <dbReference type="NCBI Taxonomy" id="405948"/>
    <lineage>
        <taxon>Bacteria</taxon>
        <taxon>Bacillati</taxon>
        <taxon>Actinomycetota</taxon>
        <taxon>Actinomycetes</taxon>
        <taxon>Pseudonocardiales</taxon>
        <taxon>Pseudonocardiaceae</taxon>
        <taxon>Saccharopolyspora</taxon>
    </lineage>
</organism>
<gene>
    <name evidence="1" type="primary">tatA</name>
    <name type="ordered locus">SACE_2262</name>
</gene>
<reference key="1">
    <citation type="journal article" date="2007" name="Nat. Biotechnol.">
        <title>Complete genome sequence of the erythromycin-producing bacterium Saccharopolyspora erythraea NRRL23338.</title>
        <authorList>
            <person name="Oliynyk M."/>
            <person name="Samborskyy M."/>
            <person name="Lester J.B."/>
            <person name="Mironenko T."/>
            <person name="Scott N."/>
            <person name="Dickens S."/>
            <person name="Haydock S.F."/>
            <person name="Leadlay P.F."/>
        </authorList>
    </citation>
    <scope>NUCLEOTIDE SEQUENCE [LARGE SCALE GENOMIC DNA]</scope>
    <source>
        <strain>ATCC 11635 / DSM 40517 / JCM 4748 / NBRC 13426 / NCIMB 8594 / NRRL 2338</strain>
    </source>
</reference>
<sequence length="90" mass="9666">MGLPGGWELVLIVGVLVLLFGATKLPQMARSLGQSARVFKAEARGMKEDEEAAKREKQAKSEPQQLTAGESSAPTVASPVEETQRNDSKK</sequence>
<evidence type="ECO:0000255" key="1">
    <source>
        <dbReference type="HAMAP-Rule" id="MF_00236"/>
    </source>
</evidence>
<evidence type="ECO:0000256" key="2">
    <source>
        <dbReference type="SAM" id="MobiDB-lite"/>
    </source>
</evidence>
<feature type="chain" id="PRO_0000336643" description="Sec-independent protein translocase protein TatA">
    <location>
        <begin position="1"/>
        <end position="90"/>
    </location>
</feature>
<feature type="transmembrane region" description="Helical" evidence="1">
    <location>
        <begin position="1"/>
        <end position="21"/>
    </location>
</feature>
<feature type="region of interest" description="Disordered" evidence="2">
    <location>
        <begin position="42"/>
        <end position="90"/>
    </location>
</feature>
<feature type="compositionally biased region" description="Basic and acidic residues" evidence="2">
    <location>
        <begin position="42"/>
        <end position="60"/>
    </location>
</feature>
<feature type="compositionally biased region" description="Polar residues" evidence="2">
    <location>
        <begin position="61"/>
        <end position="75"/>
    </location>
</feature>
<keyword id="KW-1003">Cell membrane</keyword>
<keyword id="KW-0472">Membrane</keyword>
<keyword id="KW-0653">Protein transport</keyword>
<keyword id="KW-1185">Reference proteome</keyword>
<keyword id="KW-0811">Translocation</keyword>
<keyword id="KW-0812">Transmembrane</keyword>
<keyword id="KW-1133">Transmembrane helix</keyword>
<keyword id="KW-0813">Transport</keyword>
<comment type="function">
    <text evidence="1">Part of the twin-arginine translocation (Tat) system that transports large folded proteins containing a characteristic twin-arginine motif in their signal peptide across membranes. TatA could form the protein-conducting channel of the Tat system.</text>
</comment>
<comment type="subunit">
    <text evidence="1">The Tat system comprises two distinct complexes: a TatABC complex, containing multiple copies of TatA, TatB and TatC subunits, and a separate TatA complex, containing only TatA subunits. Substrates initially bind to the TatABC complex, which probably triggers association of the separate TatA complex to form the active translocon.</text>
</comment>
<comment type="subcellular location">
    <subcellularLocation>
        <location evidence="1">Cell membrane</location>
        <topology evidence="1">Single-pass membrane protein</topology>
    </subcellularLocation>
</comment>
<comment type="similarity">
    <text evidence="1">Belongs to the TatA/E family.</text>
</comment>
<proteinExistence type="inferred from homology"/>